<organism>
    <name type="scientific">Cereibacter sphaeroides (strain ATCC 17029 / ATH 2.4.9)</name>
    <name type="common">Rhodobacter sphaeroides</name>
    <dbReference type="NCBI Taxonomy" id="349101"/>
    <lineage>
        <taxon>Bacteria</taxon>
        <taxon>Pseudomonadati</taxon>
        <taxon>Pseudomonadota</taxon>
        <taxon>Alphaproteobacteria</taxon>
        <taxon>Rhodobacterales</taxon>
        <taxon>Paracoccaceae</taxon>
        <taxon>Cereibacter</taxon>
    </lineage>
</organism>
<dbReference type="EC" id="2.2.1.2" evidence="1"/>
<dbReference type="EMBL" id="CP000577">
    <property type="protein sequence ID" value="ABN77316.1"/>
    <property type="molecule type" value="Genomic_DNA"/>
</dbReference>
<dbReference type="RefSeq" id="WP_002720727.1">
    <property type="nucleotide sequence ID" value="NC_009049.1"/>
</dbReference>
<dbReference type="SMR" id="A3PLV0"/>
<dbReference type="GeneID" id="67447295"/>
<dbReference type="KEGG" id="rsh:Rsph17029_2213"/>
<dbReference type="HOGENOM" id="CLU_079764_0_0_5"/>
<dbReference type="UniPathway" id="UPA00115">
    <property type="reaction ID" value="UER00414"/>
</dbReference>
<dbReference type="GO" id="GO:0005737">
    <property type="term" value="C:cytoplasm"/>
    <property type="evidence" value="ECO:0007669"/>
    <property type="project" value="UniProtKB-SubCell"/>
</dbReference>
<dbReference type="GO" id="GO:0016832">
    <property type="term" value="F:aldehyde-lyase activity"/>
    <property type="evidence" value="ECO:0007669"/>
    <property type="project" value="InterPro"/>
</dbReference>
<dbReference type="GO" id="GO:0004801">
    <property type="term" value="F:transaldolase activity"/>
    <property type="evidence" value="ECO:0007669"/>
    <property type="project" value="UniProtKB-UniRule"/>
</dbReference>
<dbReference type="GO" id="GO:0005975">
    <property type="term" value="P:carbohydrate metabolic process"/>
    <property type="evidence" value="ECO:0007669"/>
    <property type="project" value="InterPro"/>
</dbReference>
<dbReference type="GO" id="GO:0006098">
    <property type="term" value="P:pentose-phosphate shunt"/>
    <property type="evidence" value="ECO:0007669"/>
    <property type="project" value="UniProtKB-UniRule"/>
</dbReference>
<dbReference type="CDD" id="cd00956">
    <property type="entry name" value="Transaldolase_FSA"/>
    <property type="match status" value="1"/>
</dbReference>
<dbReference type="FunFam" id="3.20.20.70:FF:000018">
    <property type="entry name" value="Probable transaldolase"/>
    <property type="match status" value="1"/>
</dbReference>
<dbReference type="Gene3D" id="3.20.20.70">
    <property type="entry name" value="Aldolase class I"/>
    <property type="match status" value="1"/>
</dbReference>
<dbReference type="HAMAP" id="MF_00494">
    <property type="entry name" value="Transaldolase_3b"/>
    <property type="match status" value="1"/>
</dbReference>
<dbReference type="InterPro" id="IPR013785">
    <property type="entry name" value="Aldolase_TIM"/>
</dbReference>
<dbReference type="InterPro" id="IPR001585">
    <property type="entry name" value="TAL/FSA"/>
</dbReference>
<dbReference type="InterPro" id="IPR022999">
    <property type="entry name" value="Transaldolase_3B"/>
</dbReference>
<dbReference type="InterPro" id="IPR004731">
    <property type="entry name" value="Transaldolase_3B/F6P_aldolase"/>
</dbReference>
<dbReference type="InterPro" id="IPR018225">
    <property type="entry name" value="Transaldolase_AS"/>
</dbReference>
<dbReference type="InterPro" id="IPR033919">
    <property type="entry name" value="TSA/FSA_arc/bac"/>
</dbReference>
<dbReference type="NCBIfam" id="TIGR00875">
    <property type="entry name" value="fsa_talC_mipB"/>
    <property type="match status" value="1"/>
</dbReference>
<dbReference type="PANTHER" id="PTHR10683:SF40">
    <property type="entry name" value="FRUCTOSE-6-PHOSPHATE ALDOLASE 1-RELATED"/>
    <property type="match status" value="1"/>
</dbReference>
<dbReference type="PANTHER" id="PTHR10683">
    <property type="entry name" value="TRANSALDOLASE"/>
    <property type="match status" value="1"/>
</dbReference>
<dbReference type="Pfam" id="PF00923">
    <property type="entry name" value="TAL_FSA"/>
    <property type="match status" value="1"/>
</dbReference>
<dbReference type="SUPFAM" id="SSF51569">
    <property type="entry name" value="Aldolase"/>
    <property type="match status" value="1"/>
</dbReference>
<dbReference type="PROSITE" id="PS01054">
    <property type="entry name" value="TRANSALDOLASE_1"/>
    <property type="match status" value="1"/>
</dbReference>
<dbReference type="PROSITE" id="PS00958">
    <property type="entry name" value="TRANSALDOLASE_2"/>
    <property type="match status" value="1"/>
</dbReference>
<feature type="chain" id="PRO_1000126348" description="Probable transaldolase">
    <location>
        <begin position="1"/>
        <end position="219"/>
    </location>
</feature>
<feature type="active site" description="Schiff-base intermediate with substrate" evidence="1">
    <location>
        <position position="83"/>
    </location>
</feature>
<gene>
    <name evidence="1" type="primary">tal</name>
    <name type="ordered locus">Rsph17029_2213</name>
</gene>
<protein>
    <recommendedName>
        <fullName evidence="1">Probable transaldolase</fullName>
        <ecNumber evidence="1">2.2.1.2</ecNumber>
    </recommendedName>
</protein>
<accession>A3PLV0</accession>
<reference key="1">
    <citation type="submission" date="2007-02" db="EMBL/GenBank/DDBJ databases">
        <title>Complete sequence of chromosome 1 of Rhodobacter sphaeroides ATCC 17029.</title>
        <authorList>
            <person name="Copeland A."/>
            <person name="Lucas S."/>
            <person name="Lapidus A."/>
            <person name="Barry K."/>
            <person name="Detter J.C."/>
            <person name="Glavina del Rio T."/>
            <person name="Hammon N."/>
            <person name="Israni S."/>
            <person name="Dalin E."/>
            <person name="Tice H."/>
            <person name="Pitluck S."/>
            <person name="Kiss H."/>
            <person name="Brettin T."/>
            <person name="Bruce D."/>
            <person name="Han C."/>
            <person name="Tapia R."/>
            <person name="Gilna P."/>
            <person name="Schmutz J."/>
            <person name="Larimer F."/>
            <person name="Land M."/>
            <person name="Hauser L."/>
            <person name="Kyrpides N."/>
            <person name="Mikhailova N."/>
            <person name="Richardson P."/>
            <person name="Mackenzie C."/>
            <person name="Choudhary M."/>
            <person name="Donohue T.J."/>
            <person name="Kaplan S."/>
        </authorList>
    </citation>
    <scope>NUCLEOTIDE SEQUENCE [LARGE SCALE GENOMIC DNA]</scope>
    <source>
        <strain>ATCC 17029 / ATH 2.4.9</strain>
    </source>
</reference>
<keyword id="KW-0963">Cytoplasm</keyword>
<keyword id="KW-0570">Pentose shunt</keyword>
<keyword id="KW-0704">Schiff base</keyword>
<keyword id="KW-0808">Transferase</keyword>
<sequence length="219" mass="23391">MKFFVDSADVAAIAELNALGMVDGVTTNPSLILKSGRNILEVTKEICNLVSGPVSAEVVAAKAEDMIEEGRHLAEIAPNIAVKVPLTWDGLRACKVLSDEGRMVNVTLCFSVNQALLAAKAGATFISPFIGRLDDINLDGMELIADIRQVYDNYDFKTEVLAASVRTPNHVADCARIGADVITAPPAVIKALANHVLTDKGLDMFNADWAKTGQSILLK</sequence>
<proteinExistence type="inferred from homology"/>
<evidence type="ECO:0000255" key="1">
    <source>
        <dbReference type="HAMAP-Rule" id="MF_00494"/>
    </source>
</evidence>
<comment type="function">
    <text evidence="1">Transaldolase is important for the balance of metabolites in the pentose-phosphate pathway.</text>
</comment>
<comment type="catalytic activity">
    <reaction evidence="1">
        <text>D-sedoheptulose 7-phosphate + D-glyceraldehyde 3-phosphate = D-erythrose 4-phosphate + beta-D-fructose 6-phosphate</text>
        <dbReference type="Rhea" id="RHEA:17053"/>
        <dbReference type="ChEBI" id="CHEBI:16897"/>
        <dbReference type="ChEBI" id="CHEBI:57483"/>
        <dbReference type="ChEBI" id="CHEBI:57634"/>
        <dbReference type="ChEBI" id="CHEBI:59776"/>
        <dbReference type="EC" id="2.2.1.2"/>
    </reaction>
</comment>
<comment type="pathway">
    <text evidence="1">Carbohydrate degradation; pentose phosphate pathway; D-glyceraldehyde 3-phosphate and beta-D-fructose 6-phosphate from D-ribose 5-phosphate and D-xylulose 5-phosphate (non-oxidative stage): step 2/3.</text>
</comment>
<comment type="subcellular location">
    <subcellularLocation>
        <location evidence="1">Cytoplasm</location>
    </subcellularLocation>
</comment>
<comment type="similarity">
    <text evidence="1">Belongs to the transaldolase family. Type 3B subfamily.</text>
</comment>
<name>TAL_CERS1</name>